<proteinExistence type="evidence at protein level"/>
<name>HLP_ARATH</name>
<gene>
    <name type="primary">HLP</name>
    <name type="ordered locus">At5g46160</name>
    <name type="ORF">MCL19.22</name>
</gene>
<organism>
    <name type="scientific">Arabidopsis thaliana</name>
    <name type="common">Mouse-ear cress</name>
    <dbReference type="NCBI Taxonomy" id="3702"/>
    <lineage>
        <taxon>Eukaryota</taxon>
        <taxon>Viridiplantae</taxon>
        <taxon>Streptophyta</taxon>
        <taxon>Embryophyta</taxon>
        <taxon>Tracheophyta</taxon>
        <taxon>Spermatophyta</taxon>
        <taxon>Magnoliopsida</taxon>
        <taxon>eudicotyledons</taxon>
        <taxon>Gunneridae</taxon>
        <taxon>Pentapetalae</taxon>
        <taxon>rosids</taxon>
        <taxon>malvids</taxon>
        <taxon>Brassicales</taxon>
        <taxon>Brassicaceae</taxon>
        <taxon>Camelineae</taxon>
        <taxon>Arabidopsis</taxon>
    </lineage>
</organism>
<reference key="1">
    <citation type="journal article" date="2001" name="Plant Cell">
        <title>The Arabidopsis HUELLENLOS gene, which is essential for normal ovule development, encodes a mitochondrial ribosomal protein.</title>
        <authorList>
            <person name="Skinner D.J."/>
            <person name="Baker S.C."/>
            <person name="Meister R.J."/>
            <person name="Broadhvest J."/>
            <person name="Schneitz K."/>
            <person name="Gasser C.S."/>
        </authorList>
    </citation>
    <scope>NUCLEOTIDE SEQUENCE [MRNA] (ISOFORM 1)</scope>
    <scope>SUBCELLULAR LOCATION</scope>
    <scope>TISSUE SPECIFICITY</scope>
</reference>
<reference key="2">
    <citation type="journal article" date="1997" name="DNA Res.">
        <title>Structural analysis of Arabidopsis thaliana chromosome 5. II. Sequence features of the regions of 1,044,062 bp covered by thirteen physically assigned P1 clones.</title>
        <authorList>
            <person name="Kotani H."/>
            <person name="Nakamura Y."/>
            <person name="Sato S."/>
            <person name="Kaneko T."/>
            <person name="Asamizu E."/>
            <person name="Miyajima N."/>
            <person name="Tabata S."/>
        </authorList>
    </citation>
    <scope>NUCLEOTIDE SEQUENCE [LARGE SCALE GENOMIC DNA]</scope>
    <source>
        <strain>cv. Columbia</strain>
    </source>
</reference>
<reference key="3">
    <citation type="journal article" date="2017" name="Plant J.">
        <title>Araport11: a complete reannotation of the Arabidopsis thaliana reference genome.</title>
        <authorList>
            <person name="Cheng C.Y."/>
            <person name="Krishnakumar V."/>
            <person name="Chan A.P."/>
            <person name="Thibaud-Nissen F."/>
            <person name="Schobel S."/>
            <person name="Town C.D."/>
        </authorList>
    </citation>
    <scope>GENOME REANNOTATION</scope>
    <source>
        <strain>cv. Columbia</strain>
    </source>
</reference>
<reference key="4">
    <citation type="journal article" date="2003" name="Science">
        <title>Empirical analysis of transcriptional activity in the Arabidopsis genome.</title>
        <authorList>
            <person name="Yamada K."/>
            <person name="Lim J."/>
            <person name="Dale J.M."/>
            <person name="Chen H."/>
            <person name="Shinn P."/>
            <person name="Palm C.J."/>
            <person name="Southwick A.M."/>
            <person name="Wu H.C."/>
            <person name="Kim C.J."/>
            <person name="Nguyen M."/>
            <person name="Pham P.K."/>
            <person name="Cheuk R.F."/>
            <person name="Karlin-Newmann G."/>
            <person name="Liu S.X."/>
            <person name="Lam B."/>
            <person name="Sakano H."/>
            <person name="Wu T."/>
            <person name="Yu G."/>
            <person name="Miranda M."/>
            <person name="Quach H.L."/>
            <person name="Tripp M."/>
            <person name="Chang C.H."/>
            <person name="Lee J.M."/>
            <person name="Toriumi M.J."/>
            <person name="Chan M.M."/>
            <person name="Tang C.C."/>
            <person name="Onodera C.S."/>
            <person name="Deng J.M."/>
            <person name="Akiyama K."/>
            <person name="Ansari Y."/>
            <person name="Arakawa T."/>
            <person name="Banh J."/>
            <person name="Banno F."/>
            <person name="Bowser L."/>
            <person name="Brooks S.Y."/>
            <person name="Carninci P."/>
            <person name="Chao Q."/>
            <person name="Choy N."/>
            <person name="Enju A."/>
            <person name="Goldsmith A.D."/>
            <person name="Gurjal M."/>
            <person name="Hansen N.F."/>
            <person name="Hayashizaki Y."/>
            <person name="Johnson-Hopson C."/>
            <person name="Hsuan V.W."/>
            <person name="Iida K."/>
            <person name="Karnes M."/>
            <person name="Khan S."/>
            <person name="Koesema E."/>
            <person name="Ishida J."/>
            <person name="Jiang P.X."/>
            <person name="Jones T."/>
            <person name="Kawai J."/>
            <person name="Kamiya A."/>
            <person name="Meyers C."/>
            <person name="Nakajima M."/>
            <person name="Narusaka M."/>
            <person name="Seki M."/>
            <person name="Sakurai T."/>
            <person name="Satou M."/>
            <person name="Tamse R."/>
            <person name="Vaysberg M."/>
            <person name="Wallender E.K."/>
            <person name="Wong C."/>
            <person name="Yamamura Y."/>
            <person name="Yuan S."/>
            <person name="Shinozaki K."/>
            <person name="Davis R.W."/>
            <person name="Theologis A."/>
            <person name="Ecker J.R."/>
        </authorList>
    </citation>
    <scope>NUCLEOTIDE SEQUENCE [LARGE SCALE MRNA] (ISOFORMS 1 AND 2)</scope>
    <source>
        <strain>cv. Columbia</strain>
    </source>
</reference>
<reference key="5">
    <citation type="journal article" date="2023" name="Plant Cell">
        <title>An updated nomenclature for plant ribosomal protein genes.</title>
        <authorList>
            <person name="Scarpin M.R."/>
            <person name="Busche M."/>
            <person name="Martinez R.E."/>
            <person name="Harper L.C."/>
            <person name="Reiser L."/>
            <person name="Szakonyi D."/>
            <person name="Merchante C."/>
            <person name="Lan T."/>
            <person name="Xiong W."/>
            <person name="Mo B."/>
            <person name="Tang G."/>
            <person name="Chen X."/>
            <person name="Bailey-Serres J."/>
            <person name="Browning K.S."/>
            <person name="Brunkard J.O."/>
        </authorList>
    </citation>
    <scope>NOMENCLATURE</scope>
</reference>
<evidence type="ECO:0000250" key="1"/>
<evidence type="ECO:0000255" key="2"/>
<evidence type="ECO:0000269" key="3">
    <source>
    </source>
</evidence>
<evidence type="ECO:0000303" key="4">
    <source>
    </source>
</evidence>
<evidence type="ECO:0000303" key="5">
    <source>
    </source>
</evidence>
<evidence type="ECO:0000305" key="6"/>
<protein>
    <recommendedName>
        <fullName evidence="5">Large ribosomal subunit protein uL14mz</fullName>
    </recommendedName>
    <alternativeName>
        <fullName>50S ribosomal protein HLP, mitochondrial</fullName>
    </alternativeName>
    <alternativeName>
        <fullName>Protein HUELLENLOS PARALOG</fullName>
    </alternativeName>
</protein>
<accession>Q93Z17</accession>
<accession>F4KG27</accession>
<accession>Q8RWH1</accession>
<accession>Q9FNK6</accession>
<dbReference type="EMBL" id="AF402993">
    <property type="protein sequence ID" value="AAL60452.1"/>
    <property type="molecule type" value="mRNA"/>
</dbReference>
<dbReference type="EMBL" id="AB006698">
    <property type="protein sequence ID" value="BAB08261.1"/>
    <property type="status" value="ALT_SEQ"/>
    <property type="molecule type" value="Genomic_DNA"/>
</dbReference>
<dbReference type="EMBL" id="CP002688">
    <property type="protein sequence ID" value="AED95347.1"/>
    <property type="molecule type" value="Genomic_DNA"/>
</dbReference>
<dbReference type="EMBL" id="CP002688">
    <property type="protein sequence ID" value="AED95348.1"/>
    <property type="molecule type" value="Genomic_DNA"/>
</dbReference>
<dbReference type="EMBL" id="AY058844">
    <property type="protein sequence ID" value="AAL24232.1"/>
    <property type="molecule type" value="mRNA"/>
</dbReference>
<dbReference type="EMBL" id="AY093096">
    <property type="protein sequence ID" value="AAM13095.1"/>
    <property type="molecule type" value="mRNA"/>
</dbReference>
<dbReference type="EMBL" id="AY128773">
    <property type="protein sequence ID" value="AAM91173.1"/>
    <property type="molecule type" value="mRNA"/>
</dbReference>
<dbReference type="RefSeq" id="NP_199428.3">
    <molecule id="Q93Z17-2"/>
    <property type="nucleotide sequence ID" value="NM_123985.3"/>
</dbReference>
<dbReference type="RefSeq" id="NP_851140.1">
    <molecule id="Q93Z17-1"/>
    <property type="nucleotide sequence ID" value="NM_180809.3"/>
</dbReference>
<dbReference type="PDB" id="6XYW">
    <property type="method" value="EM"/>
    <property type="resolution" value="3.86 A"/>
    <property type="chains" value="Ak=1-173"/>
</dbReference>
<dbReference type="PDBsum" id="6XYW"/>
<dbReference type="EMDB" id="EMD-10654"/>
<dbReference type="SMR" id="Q93Z17"/>
<dbReference type="FunCoup" id="Q93Z17">
    <property type="interactions" value="152"/>
</dbReference>
<dbReference type="IntAct" id="Q93Z17">
    <property type="interactions" value="1"/>
</dbReference>
<dbReference type="STRING" id="3702.Q93Z17"/>
<dbReference type="PaxDb" id="3702-AT5G46160.1"/>
<dbReference type="ProteomicsDB" id="228743">
    <molecule id="Q93Z17-1"/>
</dbReference>
<dbReference type="EnsemblPlants" id="AT5G46160.1">
    <molecule id="Q93Z17-1"/>
    <property type="protein sequence ID" value="AT5G46160.1"/>
    <property type="gene ID" value="AT5G46160"/>
</dbReference>
<dbReference type="EnsemblPlants" id="AT5G46160.2">
    <molecule id="Q93Z17-2"/>
    <property type="protein sequence ID" value="AT5G46160.2"/>
    <property type="gene ID" value="AT5G46160"/>
</dbReference>
<dbReference type="GeneID" id="834658"/>
<dbReference type="Gramene" id="AT5G46160.1">
    <molecule id="Q93Z17-1"/>
    <property type="protein sequence ID" value="AT5G46160.1"/>
    <property type="gene ID" value="AT5G46160"/>
</dbReference>
<dbReference type="Gramene" id="AT5G46160.2">
    <molecule id="Q93Z17-2"/>
    <property type="protein sequence ID" value="AT5G46160.2"/>
    <property type="gene ID" value="AT5G46160"/>
</dbReference>
<dbReference type="KEGG" id="ath:AT5G46160"/>
<dbReference type="Araport" id="AT5G46160"/>
<dbReference type="TAIR" id="AT5G46160"/>
<dbReference type="eggNOG" id="KOG0901">
    <property type="taxonomic scope" value="Eukaryota"/>
</dbReference>
<dbReference type="InParanoid" id="Q93Z17"/>
<dbReference type="OMA" id="FTTSHEM"/>
<dbReference type="PhylomeDB" id="Q93Z17"/>
<dbReference type="PRO" id="PR:Q93Z17"/>
<dbReference type="Proteomes" id="UP000006548">
    <property type="component" value="Chromosome 5"/>
</dbReference>
<dbReference type="ExpressionAtlas" id="Q93Z17">
    <property type="expression patterns" value="baseline and differential"/>
</dbReference>
<dbReference type="GO" id="GO:0015934">
    <property type="term" value="C:large ribosomal subunit"/>
    <property type="evidence" value="ECO:0007669"/>
    <property type="project" value="InterPro"/>
</dbReference>
<dbReference type="GO" id="GO:0005739">
    <property type="term" value="C:mitochondrion"/>
    <property type="evidence" value="ECO:0000314"/>
    <property type="project" value="UniProtKB"/>
</dbReference>
<dbReference type="GO" id="GO:0019843">
    <property type="term" value="F:rRNA binding"/>
    <property type="evidence" value="ECO:0007669"/>
    <property type="project" value="UniProtKB-KW"/>
</dbReference>
<dbReference type="GO" id="GO:0003735">
    <property type="term" value="F:structural constituent of ribosome"/>
    <property type="evidence" value="ECO:0007669"/>
    <property type="project" value="InterPro"/>
</dbReference>
<dbReference type="GO" id="GO:0006412">
    <property type="term" value="P:translation"/>
    <property type="evidence" value="ECO:0007669"/>
    <property type="project" value="InterPro"/>
</dbReference>
<dbReference type="CDD" id="cd00337">
    <property type="entry name" value="Ribosomal_uL14"/>
    <property type="match status" value="1"/>
</dbReference>
<dbReference type="FunFam" id="2.40.150.20:FF:000006">
    <property type="entry name" value="50S ribosomal protein HLP, mitochondrial-like"/>
    <property type="match status" value="1"/>
</dbReference>
<dbReference type="Gene3D" id="2.40.150.20">
    <property type="entry name" value="Ribosomal protein L14"/>
    <property type="match status" value="1"/>
</dbReference>
<dbReference type="HAMAP" id="MF_01367">
    <property type="entry name" value="Ribosomal_uL14"/>
    <property type="match status" value="1"/>
</dbReference>
<dbReference type="InterPro" id="IPR000218">
    <property type="entry name" value="Ribosomal_uL14"/>
</dbReference>
<dbReference type="InterPro" id="IPR005745">
    <property type="entry name" value="Ribosomal_uL14_bac-type"/>
</dbReference>
<dbReference type="InterPro" id="IPR019972">
    <property type="entry name" value="Ribosomal_uL14_CS"/>
</dbReference>
<dbReference type="InterPro" id="IPR036853">
    <property type="entry name" value="Ribosomal_uL14_sf"/>
</dbReference>
<dbReference type="NCBIfam" id="TIGR01067">
    <property type="entry name" value="rplN_bact"/>
    <property type="match status" value="1"/>
</dbReference>
<dbReference type="PANTHER" id="PTHR11761">
    <property type="entry name" value="50S/60S RIBOSOMAL PROTEIN L14/L23"/>
    <property type="match status" value="1"/>
</dbReference>
<dbReference type="PANTHER" id="PTHR11761:SF3">
    <property type="entry name" value="LARGE RIBOSOMAL SUBUNIT PROTEIN UL14M"/>
    <property type="match status" value="1"/>
</dbReference>
<dbReference type="Pfam" id="PF00238">
    <property type="entry name" value="Ribosomal_L14"/>
    <property type="match status" value="1"/>
</dbReference>
<dbReference type="SMART" id="SM01374">
    <property type="entry name" value="Ribosomal_L14"/>
    <property type="match status" value="1"/>
</dbReference>
<dbReference type="SUPFAM" id="SSF50193">
    <property type="entry name" value="Ribosomal protein L14"/>
    <property type="match status" value="1"/>
</dbReference>
<dbReference type="PROSITE" id="PS00049">
    <property type="entry name" value="RIBOSOMAL_L14"/>
    <property type="match status" value="1"/>
</dbReference>
<keyword id="KW-0002">3D-structure</keyword>
<keyword id="KW-0025">Alternative splicing</keyword>
<keyword id="KW-0496">Mitochondrion</keyword>
<keyword id="KW-1185">Reference proteome</keyword>
<keyword id="KW-0687">Ribonucleoprotein</keyword>
<keyword id="KW-0689">Ribosomal protein</keyword>
<keyword id="KW-0694">RNA-binding</keyword>
<keyword id="KW-0699">rRNA-binding</keyword>
<keyword id="KW-0809">Transit peptide</keyword>
<comment type="function">
    <text evidence="1">Binds to 23S rRNA in mitochondrion.</text>
</comment>
<comment type="subunit">
    <text evidence="1 6">Part of the mitochondrial 50S ribosomal subunit.</text>
</comment>
<comment type="subcellular location">
    <subcellularLocation>
        <location evidence="3">Mitochondrion</location>
    </subcellularLocation>
</comment>
<comment type="alternative products">
    <event type="alternative splicing"/>
    <isoform>
        <id>Q93Z17-1</id>
        <name>1</name>
        <sequence type="displayed"/>
    </isoform>
    <isoform>
        <id>Q93Z17-2</id>
        <name>2</name>
        <sequence type="described" ref="VSP_054900"/>
    </isoform>
</comment>
<comment type="tissue specificity">
    <text evidence="3">Mostly expressed in leaves and inflorescences, including floral organs and meristems, and, to a lower extent, in pistils.</text>
</comment>
<comment type="similarity">
    <text evidence="6">Belongs to the universal ribosomal protein uL14 family.</text>
</comment>
<comment type="sequence caution" evidence="6">
    <conflict type="erroneous gene model prediction">
        <sequence resource="EMBL-CDS" id="BAB08261"/>
    </conflict>
</comment>
<sequence>MAAAFASRLTRGGRSLLGGLNNGGSMNSSNGMMNESILSQQQQRRTFIQMGTVLKVVDNSGAKKVMCIQALKGKKGARLGDTIVASVKEAMPNGKVKKGAVVYGVVVRAAMQRGRVDGSEVRFDDNAVVLVDSKDKNTKTDRQPIGTRVFGPVPHELRKKKHLKILALAQHVA</sequence>
<feature type="transit peptide" description="Mitochondrion" evidence="2">
    <location>
        <begin position="1"/>
        <end position="61"/>
    </location>
</feature>
<feature type="chain" id="PRO_0000429332" description="Large ribosomal subunit protein uL14mz">
    <location>
        <begin position="62"/>
        <end position="173"/>
    </location>
</feature>
<feature type="splice variant" id="VSP_054900" description="In isoform 2." evidence="4">
    <location>
        <position position="40"/>
    </location>
</feature>
<feature type="sequence conflict" description="In Ref. 4; AAM13095/AAM91173." evidence="6" ref="4">
    <original>G</original>
    <variation>V</variation>
    <location>
        <position position="23"/>
    </location>
</feature>